<proteinExistence type="inferred from homology"/>
<organismHost>
    <name type="scientific">Bos taurus</name>
    <name type="common">Bovine</name>
    <dbReference type="NCBI Taxonomy" id="9913"/>
</organismHost>
<organismHost>
    <name type="scientific">Felis catus</name>
    <name type="common">Cat</name>
    <name type="synonym">Felis silvestris catus</name>
    <dbReference type="NCBI Taxonomy" id="9685"/>
</organismHost>
<organismHost>
    <name type="scientific">Panthera leo</name>
    <name type="common">Lion</name>
    <dbReference type="NCBI Taxonomy" id="9689"/>
</organismHost>
<dbReference type="EMBL" id="L01099">
    <property type="protein sequence ID" value="AAA46056.1"/>
    <property type="molecule type" value="Genomic_DNA"/>
</dbReference>
<dbReference type="PIR" id="A45710">
    <property type="entry name" value="A45710"/>
</dbReference>
<dbReference type="SMR" id="Q02484"/>
<dbReference type="InterPro" id="IPR008550">
    <property type="entry name" value="Herpesvirus_BRRF2-like"/>
</dbReference>
<dbReference type="Pfam" id="PF05734">
    <property type="entry name" value="DUF832"/>
    <property type="match status" value="1"/>
</dbReference>
<evidence type="ECO:0000305" key="1"/>
<comment type="similarity">
    <text evidence="1">Belongs to the herpesviridae BBRF2 family.</text>
</comment>
<feature type="chain" id="PRO_0000116261" description="Uncharacterized protein in IE2 5'region">
    <location>
        <begin position="1" status="less than"/>
        <end position="332"/>
    </location>
</feature>
<feature type="non-terminal residue">
    <location>
        <position position="1"/>
    </location>
</feature>
<accession>Q02484</accession>
<name>YIE2_BHV4D</name>
<organism>
    <name type="scientific">Bovine herpesvirus 4 (strain DN-599)</name>
    <name type="common">BoHV-4</name>
    <name type="synonym">Movar virus</name>
    <dbReference type="NCBI Taxonomy" id="10355"/>
    <lineage>
        <taxon>Viruses</taxon>
        <taxon>Duplodnaviria</taxon>
        <taxon>Heunggongvirae</taxon>
        <taxon>Peploviricota</taxon>
        <taxon>Herviviricetes</taxon>
        <taxon>Herpesvirales</taxon>
        <taxon>Orthoherpesviridae</taxon>
        <taxon>Gammaherpesvirinae</taxon>
        <taxon>Rhadinovirus</taxon>
        <taxon>Rhadinovirus bovinegamma4</taxon>
    </lineage>
</organism>
<sequence>MEITVYIPGIEENQRPHFDEIFSTFAKRGNVREAVSSLHKLFKKQKNTGLLASLVILKQFVDTSRKSQERFNLLEILQQTKFLAQSIYKHIKSQEHSCDMEDMFSDCKDRMSLILSESCGCLNCITTTKQLMNSLCDARPPKLSSHKKVCQAHNFLTTVHNQVVVADRVSVSVLSLSDLVLDMGDFPELPKDIQLETRGVASCVYLCWFYYMLLKHVQNDFEILEASINNWLLTNGYSQGFTSYDNLLPIVTTKRGSGELTYNLDSFQVLQNTLQTVRNFLTTQPPRREQKHLLTLLKEKGYYVEPKESMCKTPQCPEEEGGLPFLKKLGTG</sequence>
<reference key="1">
    <citation type="journal article" date="1993" name="J. Virol.">
        <title>Characterization of a bovine herpesvirus 4 immediate-early RNA encoding a homolog of the Epstein-Barr virus R transactivator.</title>
        <authorList>
            <person name="van Santen V.L."/>
        </authorList>
    </citation>
    <scope>NUCLEOTIDE SEQUENCE [GENOMIC DNA]</scope>
</reference>
<protein>
    <recommendedName>
        <fullName>Uncharacterized protein in IE2 5'region</fullName>
    </recommendedName>
</protein>